<proteinExistence type="evidence at transcript level"/>
<feature type="chain" id="PRO_0000052245" description="Trans-cinnamate 4-monooxygenase">
    <location>
        <begin position="1"/>
        <end position="505"/>
    </location>
</feature>
<feature type="transmembrane region" description="Helical" evidence="3">
    <location>
        <begin position="3"/>
        <end position="23"/>
    </location>
</feature>
<feature type="binding site" evidence="2">
    <location>
        <begin position="213"/>
        <end position="218"/>
    </location>
    <ligand>
        <name>(E)-cinnamate</name>
        <dbReference type="ChEBI" id="CHEBI:15669"/>
    </ligand>
</feature>
<feature type="binding site" evidence="2">
    <location>
        <position position="306"/>
    </location>
    <ligand>
        <name>(E)-cinnamate</name>
        <dbReference type="ChEBI" id="CHEBI:15669"/>
    </ligand>
</feature>
<feature type="binding site" description="axial binding residue" evidence="2">
    <location>
        <position position="447"/>
    </location>
    <ligand>
        <name>heme</name>
        <dbReference type="ChEBI" id="CHEBI:30413"/>
    </ligand>
    <ligandPart>
        <name>Fe</name>
        <dbReference type="ChEBI" id="CHEBI:18248"/>
    </ligandPart>
</feature>
<organism>
    <name type="scientific">Glycyrrhiza echinata</name>
    <name type="common">Licorice</name>
    <dbReference type="NCBI Taxonomy" id="46348"/>
    <lineage>
        <taxon>Eukaryota</taxon>
        <taxon>Viridiplantae</taxon>
        <taxon>Streptophyta</taxon>
        <taxon>Embryophyta</taxon>
        <taxon>Tracheophyta</taxon>
        <taxon>Spermatophyta</taxon>
        <taxon>Magnoliopsida</taxon>
        <taxon>eudicotyledons</taxon>
        <taxon>Gunneridae</taxon>
        <taxon>Pentapetalae</taxon>
        <taxon>rosids</taxon>
        <taxon>fabids</taxon>
        <taxon>Fabales</taxon>
        <taxon>Fabaceae</taxon>
        <taxon>Papilionoideae</taxon>
        <taxon>50 kb inversion clade</taxon>
        <taxon>NPAAA clade</taxon>
        <taxon>Hologalegina</taxon>
        <taxon>IRL clade</taxon>
        <taxon>Galegeae</taxon>
        <taxon>Glycyrrhiza</taxon>
    </lineage>
</organism>
<gene>
    <name type="primary">CYP73A14</name>
    <name type="synonym">CYP73</name>
</gene>
<accession>Q96423</accession>
<evidence type="ECO:0000250" key="1">
    <source>
        <dbReference type="UniProtKB" id="Q04468"/>
    </source>
</evidence>
<evidence type="ECO:0000250" key="2">
    <source>
        <dbReference type="UniProtKB" id="Q94IP1"/>
    </source>
</evidence>
<evidence type="ECO:0000255" key="3"/>
<evidence type="ECO:0000305" key="4"/>
<keyword id="KW-0349">Heme</keyword>
<keyword id="KW-0408">Iron</keyword>
<keyword id="KW-0472">Membrane</keyword>
<keyword id="KW-0479">Metal-binding</keyword>
<keyword id="KW-0503">Monooxygenase</keyword>
<keyword id="KW-0560">Oxidoreductase</keyword>
<keyword id="KW-0812">Transmembrane</keyword>
<keyword id="KW-1133">Transmembrane helix</keyword>
<comment type="function">
    <text evidence="1">Catalyzes the first oxidative step of the phenylpropanoid pathway in higher plants by transforming trans-cinnamate into p-coumarate (By similarity). The compounds formed by this pathway are essential components for lignification, pollination, and defense against ultraviolet light, predators and pathogens (By similarity).</text>
</comment>
<comment type="catalytic activity">
    <reaction evidence="1">
        <text>(E)-cinnamate + reduced [NADPH--hemoprotein reductase] + O2 = (E)-4-coumarate + oxidized [NADPH--hemoprotein reductase] + H2O + H(+)</text>
        <dbReference type="Rhea" id="RHEA:10608"/>
        <dbReference type="Rhea" id="RHEA-COMP:11964"/>
        <dbReference type="Rhea" id="RHEA-COMP:11965"/>
        <dbReference type="ChEBI" id="CHEBI:12876"/>
        <dbReference type="ChEBI" id="CHEBI:15377"/>
        <dbReference type="ChEBI" id="CHEBI:15378"/>
        <dbReference type="ChEBI" id="CHEBI:15379"/>
        <dbReference type="ChEBI" id="CHEBI:15669"/>
        <dbReference type="ChEBI" id="CHEBI:57618"/>
        <dbReference type="ChEBI" id="CHEBI:58210"/>
        <dbReference type="EC" id="1.14.14.91"/>
    </reaction>
</comment>
<comment type="cofactor">
    <cofactor evidence="2">
        <name>heme</name>
        <dbReference type="ChEBI" id="CHEBI:30413"/>
    </cofactor>
</comment>
<comment type="pathway">
    <text evidence="4">Phenylpropanoid metabolism; trans-4-coumarate biosynthesis; trans-4-coumarate from trans-cinnamate: step 1/1.</text>
</comment>
<comment type="subcellular location">
    <subcellularLocation>
        <location evidence="3">Membrane</location>
        <topology evidence="3">Single-pass membrane protein</topology>
    </subcellularLocation>
</comment>
<comment type="induction">
    <text>By fungal elicitor.</text>
</comment>
<comment type="similarity">
    <text evidence="4">Belongs to the cytochrome P450 family.</text>
</comment>
<name>TCMO_GLYEC</name>
<protein>
    <recommendedName>
        <fullName>Trans-cinnamate 4-monooxygenase</fullName>
        <ecNumber evidence="1">1.14.14.91</ecNumber>
    </recommendedName>
    <alternativeName>
        <fullName>Cinnamic acid 4-hydroxylase</fullName>
        <shortName>C4H</shortName>
        <shortName>CA4H</shortName>
    </alternativeName>
    <alternativeName>
        <fullName>Cytochrome P450 73</fullName>
    </alternativeName>
    <alternativeName>
        <fullName>Cytochrome P450C4H</fullName>
    </alternativeName>
</protein>
<sequence>MDLLLLEKTLLGLFIAAITAIAISKLRGRRFKLPPGPIPVPIFGNWLQVGDDLNHRNLTDLAKRFGDIFLLRMGQRNLVVVSSPELAKEVLHTQGVEFGSRTRNVVFDIFTGKGQDMVFTVYGEHWRKMRRIMTVPFFTNKVVQQYRFGWESEAASVVDDVRRNPDAAAGGIVLRRRLQLMMYNNMYRIMFDRRFESEEDPLFVKLKALNGERSRLAQSFEYNYGDFIPILRPFLKGYLKICKEVKERRLKLFKDYFVDERMKLESTKSTSNEGLKCAIDHILDAQKKGEINEDNVLYIVENINVAAIETTLWSIEWGIAELVNHPEIQKKVRDEIDRVLGPGHQVTEPDMQKLPYLQAVIKETLRLRMAIPLLVPHMNLHDAKLGGYDIPAESKILVNAWWLANNPANWKRPEEFRPERFLEEESHVEANGNDFRYLPFGVGRRSCPGIILALPILGITLGRLVQNFELLPPPGQSKLDTAEKGGQFSLHILKHSTIVAKPRSF</sequence>
<dbReference type="EC" id="1.14.14.91" evidence="1"/>
<dbReference type="EMBL" id="D87520">
    <property type="protein sequence ID" value="BAA13414.1"/>
    <property type="molecule type" value="mRNA"/>
</dbReference>
<dbReference type="SMR" id="Q96423"/>
<dbReference type="UniPathway" id="UPA00825">
    <property type="reaction ID" value="UER00789"/>
</dbReference>
<dbReference type="GO" id="GO:0016020">
    <property type="term" value="C:membrane"/>
    <property type="evidence" value="ECO:0007669"/>
    <property type="project" value="UniProtKB-SubCell"/>
</dbReference>
<dbReference type="GO" id="GO:0020037">
    <property type="term" value="F:heme binding"/>
    <property type="evidence" value="ECO:0007669"/>
    <property type="project" value="InterPro"/>
</dbReference>
<dbReference type="GO" id="GO:0005506">
    <property type="term" value="F:iron ion binding"/>
    <property type="evidence" value="ECO:0007669"/>
    <property type="project" value="InterPro"/>
</dbReference>
<dbReference type="GO" id="GO:0016710">
    <property type="term" value="F:trans-cinnamate 4-monooxygenase activity"/>
    <property type="evidence" value="ECO:0007669"/>
    <property type="project" value="UniProtKB-EC"/>
</dbReference>
<dbReference type="GO" id="GO:0009808">
    <property type="term" value="P:lignin metabolic process"/>
    <property type="evidence" value="ECO:0007669"/>
    <property type="project" value="TreeGrafter"/>
</dbReference>
<dbReference type="CDD" id="cd11074">
    <property type="entry name" value="CYP73"/>
    <property type="match status" value="1"/>
</dbReference>
<dbReference type="FunFam" id="1.10.630.10:FF:000013">
    <property type="entry name" value="Trans-cinnamate 4-monooxygenase"/>
    <property type="match status" value="1"/>
</dbReference>
<dbReference type="Gene3D" id="1.10.630.10">
    <property type="entry name" value="Cytochrome P450"/>
    <property type="match status" value="1"/>
</dbReference>
<dbReference type="InterPro" id="IPR001128">
    <property type="entry name" value="Cyt_P450"/>
</dbReference>
<dbReference type="InterPro" id="IPR017972">
    <property type="entry name" value="Cyt_P450_CS"/>
</dbReference>
<dbReference type="InterPro" id="IPR002401">
    <property type="entry name" value="Cyt_P450_E_grp-I"/>
</dbReference>
<dbReference type="InterPro" id="IPR036396">
    <property type="entry name" value="Cyt_P450_sf"/>
</dbReference>
<dbReference type="PANTHER" id="PTHR47948">
    <property type="entry name" value="TRANS-CINNAMATE 4-MONOOXYGENASE"/>
    <property type="match status" value="1"/>
</dbReference>
<dbReference type="PANTHER" id="PTHR47948:SF4">
    <property type="entry name" value="TRANS-CINNAMATE 4-MONOOXYGENASE"/>
    <property type="match status" value="1"/>
</dbReference>
<dbReference type="Pfam" id="PF00067">
    <property type="entry name" value="p450"/>
    <property type="match status" value="1"/>
</dbReference>
<dbReference type="PRINTS" id="PR00463">
    <property type="entry name" value="EP450I"/>
</dbReference>
<dbReference type="PRINTS" id="PR00385">
    <property type="entry name" value="P450"/>
</dbReference>
<dbReference type="SUPFAM" id="SSF48264">
    <property type="entry name" value="Cytochrome P450"/>
    <property type="match status" value="1"/>
</dbReference>
<dbReference type="PROSITE" id="PS00086">
    <property type="entry name" value="CYTOCHROME_P450"/>
    <property type="match status" value="1"/>
</dbReference>
<reference key="1">
    <citation type="journal article" date="1997" name="Plant Sci.">
        <title>Cloning of cytochrome P450 cDNAs from cultured Glycyrrhiza echinata L. cells and their transcriptional activation by elicitor-treatment.</title>
        <authorList>
            <person name="Akashi T."/>
            <person name="Aoki T."/>
            <person name="Takahashi T."/>
            <person name="Kameya N."/>
            <person name="Nakamura I."/>
            <person name="Ayabe S."/>
        </authorList>
    </citation>
    <scope>NUCLEOTIDE SEQUENCE [MRNA]</scope>
</reference>